<dbReference type="EMBL" id="X97272">
    <property type="protein sequence ID" value="CAA65927.1"/>
    <property type="molecule type" value="mRNA"/>
</dbReference>
<dbReference type="SMR" id="P52725"/>
<dbReference type="GO" id="GO:0046872">
    <property type="term" value="F:metal ion binding"/>
    <property type="evidence" value="ECO:0007669"/>
    <property type="project" value="UniProtKB-KW"/>
</dbReference>
<dbReference type="FunFam" id="4.10.10.10:FF:000001">
    <property type="entry name" value="Metallothionein"/>
    <property type="match status" value="1"/>
</dbReference>
<dbReference type="Gene3D" id="4.10.10.10">
    <property type="entry name" value="Metallothionein Isoform II"/>
    <property type="match status" value="1"/>
</dbReference>
<dbReference type="InterPro" id="IPR017854">
    <property type="entry name" value="Metalthion_dom_sf"/>
</dbReference>
<dbReference type="InterPro" id="IPR023587">
    <property type="entry name" value="Metalthion_dom_sf_vert"/>
</dbReference>
<dbReference type="InterPro" id="IPR000006">
    <property type="entry name" value="Metalthion_vert"/>
</dbReference>
<dbReference type="InterPro" id="IPR018064">
    <property type="entry name" value="Metalthion_vert_metal_BS"/>
</dbReference>
<dbReference type="PANTHER" id="PTHR23299">
    <property type="entry name" value="METALLOTHIONEIN"/>
    <property type="match status" value="1"/>
</dbReference>
<dbReference type="PANTHER" id="PTHR23299:SF24">
    <property type="entry name" value="METALLOTHIONEIN-1X"/>
    <property type="match status" value="1"/>
</dbReference>
<dbReference type="Pfam" id="PF00131">
    <property type="entry name" value="Metallothio"/>
    <property type="match status" value="1"/>
</dbReference>
<dbReference type="PRINTS" id="PR00860">
    <property type="entry name" value="MTVERTEBRATE"/>
</dbReference>
<dbReference type="SUPFAM" id="SSF57868">
    <property type="entry name" value="Metallothionein"/>
    <property type="match status" value="1"/>
</dbReference>
<dbReference type="PROSITE" id="PS00203">
    <property type="entry name" value="METALLOTHIONEIN_VRT"/>
    <property type="match status" value="1"/>
</dbReference>
<comment type="function">
    <text evidence="1">Metallothioneins have a high content of cysteine residues that bind various heavy metals.</text>
</comment>
<comment type="domain">
    <text>Class I metallothioneins contain 2 metal-binding domains: four divalent ions are chelated within cluster A of the alpha domain and are coordinated via cysteinyl thiolate bridges to 11 cysteine ligands. Cluster B, the corresponding region within the beta domain, can ligate three divalent ions to 9 cysteines.</text>
</comment>
<comment type="similarity">
    <text evidence="4">Belongs to the metallothionein superfamily. Type 1 family.</text>
</comment>
<sequence>MDPCECSKGGTCNCGGSCTCTNCSCTTCKKSCCPCCPSGCPKCASGCVCKGKTCDAACCQ</sequence>
<reference key="1">
    <citation type="submission" date="1996-04" db="EMBL/GenBank/DDBJ databases">
        <title>The use of metallothionein genes for determining the phylogenetic and evolutionary relationship between extant teleosts.</title>
        <authorList>
            <person name="Kille P."/>
            <person name="Olsson P.-E."/>
        </authorList>
    </citation>
    <scope>NUCLEOTIDE SEQUENCE [MRNA]</scope>
    <source>
        <tissue>Liver</tissue>
    </source>
</reference>
<keyword id="KW-0479">Metal-binding</keyword>
<keyword id="KW-0480">Metal-thiolate cluster</keyword>
<name>MT_PERFL</name>
<organism>
    <name type="scientific">Perca fluviatilis</name>
    <name type="common">European perch</name>
    <dbReference type="NCBI Taxonomy" id="8168"/>
    <lineage>
        <taxon>Eukaryota</taxon>
        <taxon>Metazoa</taxon>
        <taxon>Chordata</taxon>
        <taxon>Craniata</taxon>
        <taxon>Vertebrata</taxon>
        <taxon>Euteleostomi</taxon>
        <taxon>Actinopterygii</taxon>
        <taxon>Neopterygii</taxon>
        <taxon>Teleostei</taxon>
        <taxon>Neoteleostei</taxon>
        <taxon>Acanthomorphata</taxon>
        <taxon>Eupercaria</taxon>
        <taxon>Perciformes</taxon>
        <taxon>Percoidei</taxon>
        <taxon>Percidae</taxon>
        <taxon>Percinae</taxon>
        <taxon>Perca</taxon>
    </lineage>
</organism>
<accession>P52725</accession>
<feature type="chain" id="PRO_0000197307" description="Metallothionein">
    <location>
        <begin position="1"/>
        <end position="60"/>
    </location>
</feature>
<feature type="region of interest" description="Beta">
    <location>
        <begin position="1"/>
        <end position="28"/>
    </location>
</feature>
<feature type="region of interest" description="Alpha">
    <location>
        <begin position="29"/>
        <end position="60"/>
    </location>
</feature>
<feature type="binding site" evidence="2">
    <location>
        <position position="4"/>
    </location>
    <ligand>
        <name>a divalent metal cation</name>
        <dbReference type="ChEBI" id="CHEBI:60240"/>
        <label>1</label>
        <note>in cluster B</note>
    </ligand>
</feature>
<feature type="binding site" evidence="2">
    <location>
        <position position="6"/>
    </location>
    <ligand>
        <name>a divalent metal cation</name>
        <dbReference type="ChEBI" id="CHEBI:60240"/>
        <label>1</label>
        <note>in cluster B</note>
    </ligand>
</feature>
<feature type="binding site" evidence="2">
    <location>
        <position position="6"/>
    </location>
    <ligand>
        <name>a divalent metal cation</name>
        <dbReference type="ChEBI" id="CHEBI:60240"/>
        <label>2</label>
        <note>in cluster B</note>
    </ligand>
</feature>
<feature type="binding site" evidence="2">
    <location>
        <position position="12"/>
    </location>
    <ligand>
        <name>a divalent metal cation</name>
        <dbReference type="ChEBI" id="CHEBI:60240"/>
        <label>2</label>
        <note>in cluster B</note>
    </ligand>
</feature>
<feature type="binding site" evidence="2">
    <location>
        <position position="14"/>
    </location>
    <ligand>
        <name>a divalent metal cation</name>
        <dbReference type="ChEBI" id="CHEBI:60240"/>
        <label>2</label>
        <note>in cluster B</note>
    </ligand>
</feature>
<feature type="binding site" evidence="2">
    <location>
        <position position="14"/>
    </location>
    <ligand>
        <name>a divalent metal cation</name>
        <dbReference type="ChEBI" id="CHEBI:60240"/>
        <label>3</label>
        <note>in cluster B</note>
    </ligand>
</feature>
<feature type="binding site" evidence="2">
    <location>
        <position position="18"/>
    </location>
    <ligand>
        <name>a divalent metal cation</name>
        <dbReference type="ChEBI" id="CHEBI:60240"/>
        <label>3</label>
        <note>in cluster B</note>
    </ligand>
</feature>
<feature type="binding site" evidence="2">
    <location>
        <position position="20"/>
    </location>
    <ligand>
        <name>a divalent metal cation</name>
        <dbReference type="ChEBI" id="CHEBI:60240"/>
        <label>1</label>
        <note>in cluster B</note>
    </ligand>
</feature>
<feature type="binding site" evidence="2">
    <location>
        <position position="23"/>
    </location>
    <ligand>
        <name>a divalent metal cation</name>
        <dbReference type="ChEBI" id="CHEBI:60240"/>
        <label>1</label>
        <note>in cluster B</note>
    </ligand>
</feature>
<feature type="binding site" evidence="2">
    <location>
        <position position="23"/>
    </location>
    <ligand>
        <name>a divalent metal cation</name>
        <dbReference type="ChEBI" id="CHEBI:60240"/>
        <label>3</label>
        <note>in cluster B</note>
    </ligand>
</feature>
<feature type="binding site" evidence="2">
    <location>
        <position position="25"/>
    </location>
    <ligand>
        <name>a divalent metal cation</name>
        <dbReference type="ChEBI" id="CHEBI:60240"/>
        <label>2</label>
        <note>in cluster B</note>
    </ligand>
</feature>
<feature type="binding site" evidence="2">
    <location>
        <position position="28"/>
    </location>
    <ligand>
        <name>a divalent metal cation</name>
        <dbReference type="ChEBI" id="CHEBI:60240"/>
        <label>3</label>
        <note>in cluster B</note>
    </ligand>
</feature>
<feature type="binding site" evidence="2">
    <location>
        <position position="32"/>
    </location>
    <ligand>
        <name>a divalent metal cation</name>
        <dbReference type="ChEBI" id="CHEBI:60240"/>
        <label>4</label>
        <note>in cluster A</note>
    </ligand>
</feature>
<feature type="binding site" evidence="2">
    <location>
        <position position="33"/>
    </location>
    <ligand>
        <name>a divalent metal cation</name>
        <dbReference type="ChEBI" id="CHEBI:60240"/>
        <label>4</label>
        <note>in cluster A</note>
    </ligand>
</feature>
<feature type="binding site" evidence="2">
    <location>
        <position position="33"/>
    </location>
    <ligand>
        <name>a divalent metal cation</name>
        <dbReference type="ChEBI" id="CHEBI:60240"/>
        <label>5</label>
        <note>in cluster A</note>
    </ligand>
</feature>
<feature type="binding site" evidence="2">
    <location>
        <position position="35"/>
    </location>
    <ligand>
        <name>a divalent metal cation</name>
        <dbReference type="ChEBI" id="CHEBI:60240"/>
        <label>5</label>
        <note>in cluster A</note>
    </ligand>
</feature>
<feature type="binding site" evidence="2">
    <location>
        <position position="36"/>
    </location>
    <ligand>
        <name>a divalent metal cation</name>
        <dbReference type="ChEBI" id="CHEBI:60240"/>
        <label>5</label>
        <note>in cluster A</note>
    </ligand>
</feature>
<feature type="binding site" evidence="2">
    <location>
        <position position="36"/>
    </location>
    <ligand>
        <name>a divalent metal cation</name>
        <dbReference type="ChEBI" id="CHEBI:60240"/>
        <label>6</label>
        <note>in cluster A</note>
    </ligand>
</feature>
<feature type="binding site" evidence="2">
    <location>
        <position position="40"/>
    </location>
    <ligand>
        <name>a divalent metal cation</name>
        <dbReference type="ChEBI" id="CHEBI:60240"/>
        <label>6</label>
        <note>in cluster A</note>
    </ligand>
</feature>
<feature type="binding site" evidence="2">
    <location>
        <position position="43"/>
    </location>
    <ligand>
        <name>a divalent metal cation</name>
        <dbReference type="ChEBI" id="CHEBI:60240"/>
        <label>4</label>
        <note>in cluster A</note>
    </ligand>
</feature>
<feature type="binding site" evidence="2">
    <location>
        <position position="43"/>
    </location>
    <ligand>
        <name>a divalent metal cation</name>
        <dbReference type="ChEBI" id="CHEBI:60240"/>
        <label>6</label>
        <note>in cluster A</note>
    </ligand>
</feature>
<feature type="binding site" evidence="2">
    <location>
        <position position="47"/>
    </location>
    <ligand>
        <name>a divalent metal cation</name>
        <dbReference type="ChEBI" id="CHEBI:60240"/>
        <label>4</label>
        <note>in cluster A</note>
    </ligand>
</feature>
<feature type="binding site" evidence="2">
    <location>
        <position position="49"/>
    </location>
    <ligand>
        <name>a divalent metal cation</name>
        <dbReference type="ChEBI" id="CHEBI:60240"/>
        <label>5</label>
        <note>in cluster A</note>
    </ligand>
</feature>
<feature type="binding site" evidence="2">
    <location>
        <position position="49"/>
    </location>
    <ligand>
        <name>a divalent metal cation</name>
        <dbReference type="ChEBI" id="CHEBI:60240"/>
        <label>7</label>
        <note>in cluster A</note>
    </ligand>
</feature>
<feature type="binding site" evidence="3">
    <location>
        <position position="54"/>
    </location>
    <ligand>
        <name>a divalent metal cation</name>
        <dbReference type="ChEBI" id="CHEBI:60240"/>
        <label>7</label>
        <note>in cluster A</note>
    </ligand>
</feature>
<feature type="binding site" evidence="2">
    <location>
        <position position="58"/>
    </location>
    <ligand>
        <name>a divalent metal cation</name>
        <dbReference type="ChEBI" id="CHEBI:60240"/>
        <label>7</label>
        <note>in cluster A</note>
    </ligand>
</feature>
<feature type="binding site" evidence="2">
    <location>
        <position position="59"/>
    </location>
    <ligand>
        <name>a divalent metal cation</name>
        <dbReference type="ChEBI" id="CHEBI:60240"/>
        <label>6</label>
        <note>in cluster A</note>
    </ligand>
</feature>
<feature type="binding site" evidence="2">
    <location>
        <position position="59"/>
    </location>
    <ligand>
        <name>a divalent metal cation</name>
        <dbReference type="ChEBI" id="CHEBI:60240"/>
        <label>7</label>
        <note>in cluster A</note>
    </ligand>
</feature>
<evidence type="ECO:0000250" key="1"/>
<evidence type="ECO:0000250" key="2">
    <source>
        <dbReference type="UniProtKB" id="P02795"/>
    </source>
</evidence>
<evidence type="ECO:0000250" key="3">
    <source>
        <dbReference type="UniProtKB" id="P62339"/>
    </source>
</evidence>
<evidence type="ECO:0000305" key="4"/>
<gene>
    <name type="primary">mt</name>
</gene>
<proteinExistence type="inferred from homology"/>
<protein>
    <recommendedName>
        <fullName>Metallothionein</fullName>
        <shortName>MT</shortName>
    </recommendedName>
</protein>